<dbReference type="EMBL" id="AL590842">
    <property type="protein sequence ID" value="CAL22250.1"/>
    <property type="molecule type" value="Genomic_DNA"/>
</dbReference>
<dbReference type="EMBL" id="AE009952">
    <property type="protein sequence ID" value="AAM83800.1"/>
    <property type="molecule type" value="Genomic_DNA"/>
</dbReference>
<dbReference type="EMBL" id="AE017042">
    <property type="protein sequence ID" value="AAS64030.1"/>
    <property type="molecule type" value="Genomic_DNA"/>
</dbReference>
<dbReference type="PIR" id="AG0445">
    <property type="entry name" value="AG0445"/>
</dbReference>
<dbReference type="RefSeq" id="WP_002210072.1">
    <property type="nucleotide sequence ID" value="NZ_WUCM01000059.1"/>
</dbReference>
<dbReference type="RefSeq" id="YP_002348547.1">
    <property type="nucleotide sequence ID" value="NC_003143.1"/>
</dbReference>
<dbReference type="SMR" id="Q8ZAX0"/>
<dbReference type="STRING" id="214092.YPO3661"/>
<dbReference type="PaxDb" id="214092-YPO3661"/>
<dbReference type="DNASU" id="1145153"/>
<dbReference type="EnsemblBacteria" id="AAS64030">
    <property type="protein sequence ID" value="AAS64030"/>
    <property type="gene ID" value="YP_3885"/>
</dbReference>
<dbReference type="GeneID" id="57975086"/>
<dbReference type="KEGG" id="ype:YPO3661"/>
<dbReference type="KEGG" id="ypk:y0206"/>
<dbReference type="KEGG" id="ypm:YP_3885"/>
<dbReference type="PATRIC" id="fig|1028802.3.peg.1054"/>
<dbReference type="eggNOG" id="COG2717">
    <property type="taxonomic scope" value="Bacteria"/>
</dbReference>
<dbReference type="HOGENOM" id="CLU_080662_1_0_6"/>
<dbReference type="OMA" id="LHFFWMR"/>
<dbReference type="OrthoDB" id="9788328at2"/>
<dbReference type="Proteomes" id="UP000000815">
    <property type="component" value="Chromosome"/>
</dbReference>
<dbReference type="Proteomes" id="UP000001019">
    <property type="component" value="Chromosome"/>
</dbReference>
<dbReference type="Proteomes" id="UP000002490">
    <property type="component" value="Chromosome"/>
</dbReference>
<dbReference type="GO" id="GO:0005886">
    <property type="term" value="C:plasma membrane"/>
    <property type="evidence" value="ECO:0000318"/>
    <property type="project" value="GO_Central"/>
</dbReference>
<dbReference type="GO" id="GO:0009055">
    <property type="term" value="F:electron transfer activity"/>
    <property type="evidence" value="ECO:0007669"/>
    <property type="project" value="UniProtKB-UniRule"/>
</dbReference>
<dbReference type="GO" id="GO:0010181">
    <property type="term" value="F:FMN binding"/>
    <property type="evidence" value="ECO:0000318"/>
    <property type="project" value="GO_Central"/>
</dbReference>
<dbReference type="GO" id="GO:0020037">
    <property type="term" value="F:heme binding"/>
    <property type="evidence" value="ECO:0000318"/>
    <property type="project" value="GO_Central"/>
</dbReference>
<dbReference type="GO" id="GO:0046872">
    <property type="term" value="F:metal ion binding"/>
    <property type="evidence" value="ECO:0007669"/>
    <property type="project" value="UniProtKB-KW"/>
</dbReference>
<dbReference type="GO" id="GO:0016679">
    <property type="term" value="F:oxidoreductase activity, acting on diphenols and related substances as donors"/>
    <property type="evidence" value="ECO:0000318"/>
    <property type="project" value="GO_Central"/>
</dbReference>
<dbReference type="GO" id="GO:0030091">
    <property type="term" value="P:protein repair"/>
    <property type="evidence" value="ECO:0007669"/>
    <property type="project" value="UniProtKB-UniRule"/>
</dbReference>
<dbReference type="HAMAP" id="MF_01207">
    <property type="entry name" value="MsrQ"/>
    <property type="match status" value="1"/>
</dbReference>
<dbReference type="InterPro" id="IPR013130">
    <property type="entry name" value="Fe3_Rdtase_TM_dom"/>
</dbReference>
<dbReference type="InterPro" id="IPR022837">
    <property type="entry name" value="MsrQ-like"/>
</dbReference>
<dbReference type="NCBIfam" id="NF003832">
    <property type="entry name" value="PRK05419.1-4"/>
    <property type="match status" value="1"/>
</dbReference>
<dbReference type="PANTHER" id="PTHR36964">
    <property type="entry name" value="PROTEIN-METHIONINE-SULFOXIDE REDUCTASE HEME-BINDING SUBUNIT MSRQ"/>
    <property type="match status" value="1"/>
</dbReference>
<dbReference type="PANTHER" id="PTHR36964:SF1">
    <property type="entry name" value="PROTEIN-METHIONINE-SULFOXIDE REDUCTASE HEME-BINDING SUBUNIT MSRQ"/>
    <property type="match status" value="1"/>
</dbReference>
<dbReference type="Pfam" id="PF01794">
    <property type="entry name" value="Ferric_reduct"/>
    <property type="match status" value="1"/>
</dbReference>
<evidence type="ECO:0000255" key="1">
    <source>
        <dbReference type="HAMAP-Rule" id="MF_01207"/>
    </source>
</evidence>
<comment type="function">
    <text evidence="1">Part of the MsrPQ system that repairs oxidized periplasmic proteins containing methionine sulfoxide residues (Met-O), using respiratory chain electrons. Thus protects these proteins from oxidative-stress damage caused by reactive species of oxygen and chlorine generated by the host defense mechanisms. MsrPQ is essential for the maintenance of envelope integrity under bleach stress, rescuing a wide series of structurally unrelated periplasmic proteins from methionine oxidation. MsrQ provides electrons for reduction to the reductase catalytic subunit MsrP, using the quinone pool of the respiratory chain.</text>
</comment>
<comment type="cofactor">
    <cofactor evidence="1">
        <name>FMN</name>
        <dbReference type="ChEBI" id="CHEBI:58210"/>
    </cofactor>
    <text evidence="1">Binds 1 FMN per subunit.</text>
</comment>
<comment type="cofactor">
    <cofactor evidence="1">
        <name>heme b</name>
        <dbReference type="ChEBI" id="CHEBI:60344"/>
    </cofactor>
    <text evidence="1">Binds 1 heme b (iron(II)-protoporphyrin IX) group per subunit.</text>
</comment>
<comment type="subunit">
    <text evidence="1">Heterodimer of a catalytic subunit (MsrP) and a heme-binding subunit (MsrQ).</text>
</comment>
<comment type="subcellular location">
    <subcellularLocation>
        <location evidence="1">Cell inner membrane</location>
        <topology evidence="1">Multi-pass membrane protein</topology>
    </subcellularLocation>
</comment>
<comment type="similarity">
    <text evidence="1">Belongs to the MsrQ family.</text>
</comment>
<keyword id="KW-0997">Cell inner membrane</keyword>
<keyword id="KW-1003">Cell membrane</keyword>
<keyword id="KW-0249">Electron transport</keyword>
<keyword id="KW-0285">Flavoprotein</keyword>
<keyword id="KW-0288">FMN</keyword>
<keyword id="KW-0349">Heme</keyword>
<keyword id="KW-0408">Iron</keyword>
<keyword id="KW-0472">Membrane</keyword>
<keyword id="KW-0479">Metal-binding</keyword>
<keyword id="KW-1185">Reference proteome</keyword>
<keyword id="KW-0812">Transmembrane</keyword>
<keyword id="KW-1133">Transmembrane helix</keyword>
<keyword id="KW-0813">Transport</keyword>
<sequence length="206" mass="23851">MRLSLRHITWLKIAIWLAATLPLLWLVLSINLGGLSADPAKDIQHFTGRMALKLLLATLLVSPLARYSKQPLLLRCRRLLGLWCFAWGTLHLLSYSILELGLSNIGLLGHELINRPYLTLGIISWLVLLALALTSTRWAQRKMGARWQKLHNWVYVVAILAPIHYLWSVKTLSPWPIIYAVMAALLLLLRYKLLLPRYKKFRQWFR</sequence>
<name>MSRQ_YERPE</name>
<protein>
    <recommendedName>
        <fullName evidence="1">Protein-methionine-sulfoxide reductase heme-binding subunit MsrQ</fullName>
    </recommendedName>
    <alternativeName>
        <fullName evidence="1">Flavocytochrome MsrQ</fullName>
    </alternativeName>
</protein>
<proteinExistence type="inferred from homology"/>
<reference key="1">
    <citation type="journal article" date="2001" name="Nature">
        <title>Genome sequence of Yersinia pestis, the causative agent of plague.</title>
        <authorList>
            <person name="Parkhill J."/>
            <person name="Wren B.W."/>
            <person name="Thomson N.R."/>
            <person name="Titball R.W."/>
            <person name="Holden M.T.G."/>
            <person name="Prentice M.B."/>
            <person name="Sebaihia M."/>
            <person name="James K.D."/>
            <person name="Churcher C.M."/>
            <person name="Mungall K.L."/>
            <person name="Baker S."/>
            <person name="Basham D."/>
            <person name="Bentley S.D."/>
            <person name="Brooks K."/>
            <person name="Cerdeno-Tarraga A.-M."/>
            <person name="Chillingworth T."/>
            <person name="Cronin A."/>
            <person name="Davies R.M."/>
            <person name="Davis P."/>
            <person name="Dougan G."/>
            <person name="Feltwell T."/>
            <person name="Hamlin N."/>
            <person name="Holroyd S."/>
            <person name="Jagels K."/>
            <person name="Karlyshev A.V."/>
            <person name="Leather S."/>
            <person name="Moule S."/>
            <person name="Oyston P.C.F."/>
            <person name="Quail M.A."/>
            <person name="Rutherford K.M."/>
            <person name="Simmonds M."/>
            <person name="Skelton J."/>
            <person name="Stevens K."/>
            <person name="Whitehead S."/>
            <person name="Barrell B.G."/>
        </authorList>
    </citation>
    <scope>NUCLEOTIDE SEQUENCE [LARGE SCALE GENOMIC DNA]</scope>
    <source>
        <strain>CO-92 / Biovar Orientalis</strain>
    </source>
</reference>
<reference key="2">
    <citation type="journal article" date="2002" name="J. Bacteriol.">
        <title>Genome sequence of Yersinia pestis KIM.</title>
        <authorList>
            <person name="Deng W."/>
            <person name="Burland V."/>
            <person name="Plunkett G. III"/>
            <person name="Boutin A."/>
            <person name="Mayhew G.F."/>
            <person name="Liss P."/>
            <person name="Perna N.T."/>
            <person name="Rose D.J."/>
            <person name="Mau B."/>
            <person name="Zhou S."/>
            <person name="Schwartz D.C."/>
            <person name="Fetherston J.D."/>
            <person name="Lindler L.E."/>
            <person name="Brubaker R.R."/>
            <person name="Plano G.V."/>
            <person name="Straley S.C."/>
            <person name="McDonough K.A."/>
            <person name="Nilles M.L."/>
            <person name="Matson J.S."/>
            <person name="Blattner F.R."/>
            <person name="Perry R.D."/>
        </authorList>
    </citation>
    <scope>NUCLEOTIDE SEQUENCE [LARGE SCALE GENOMIC DNA]</scope>
    <source>
        <strain>KIM10+ / Biovar Mediaevalis</strain>
    </source>
</reference>
<reference key="3">
    <citation type="journal article" date="2004" name="DNA Res.">
        <title>Complete genome sequence of Yersinia pestis strain 91001, an isolate avirulent to humans.</title>
        <authorList>
            <person name="Song Y."/>
            <person name="Tong Z."/>
            <person name="Wang J."/>
            <person name="Wang L."/>
            <person name="Guo Z."/>
            <person name="Han Y."/>
            <person name="Zhang J."/>
            <person name="Pei D."/>
            <person name="Zhou D."/>
            <person name="Qin H."/>
            <person name="Pang X."/>
            <person name="Han Y."/>
            <person name="Zhai J."/>
            <person name="Li M."/>
            <person name="Cui B."/>
            <person name="Qi Z."/>
            <person name="Jin L."/>
            <person name="Dai R."/>
            <person name="Chen F."/>
            <person name="Li S."/>
            <person name="Ye C."/>
            <person name="Du Z."/>
            <person name="Lin W."/>
            <person name="Wang J."/>
            <person name="Yu J."/>
            <person name="Yang H."/>
            <person name="Wang J."/>
            <person name="Huang P."/>
            <person name="Yang R."/>
        </authorList>
    </citation>
    <scope>NUCLEOTIDE SEQUENCE [LARGE SCALE GENOMIC DNA]</scope>
    <source>
        <strain>91001 / Biovar Mediaevalis</strain>
    </source>
</reference>
<accession>Q8ZAX0</accession>
<accession>Q0WAZ1</accession>
<organism>
    <name type="scientific">Yersinia pestis</name>
    <dbReference type="NCBI Taxonomy" id="632"/>
    <lineage>
        <taxon>Bacteria</taxon>
        <taxon>Pseudomonadati</taxon>
        <taxon>Pseudomonadota</taxon>
        <taxon>Gammaproteobacteria</taxon>
        <taxon>Enterobacterales</taxon>
        <taxon>Yersiniaceae</taxon>
        <taxon>Yersinia</taxon>
    </lineage>
</organism>
<feature type="chain" id="PRO_0000091588" description="Protein-methionine-sulfoxide reductase heme-binding subunit MsrQ">
    <location>
        <begin position="1"/>
        <end position="206"/>
    </location>
</feature>
<feature type="transmembrane region" description="Helical" evidence="1">
    <location>
        <begin position="13"/>
        <end position="33"/>
    </location>
</feature>
<feature type="transmembrane region" description="Helical" evidence="1">
    <location>
        <begin position="79"/>
        <end position="99"/>
    </location>
</feature>
<feature type="transmembrane region" description="Helical" evidence="1">
    <location>
        <begin position="116"/>
        <end position="136"/>
    </location>
</feature>
<feature type="transmembrane region" description="Helical" evidence="1">
    <location>
        <begin position="147"/>
        <end position="167"/>
    </location>
</feature>
<feature type="transmembrane region" description="Helical" evidence="1">
    <location>
        <begin position="169"/>
        <end position="189"/>
    </location>
</feature>
<gene>
    <name evidence="1" type="primary">msrQ</name>
    <name type="ordered locus">YPO3661</name>
    <name type="ordered locus">y0206</name>
    <name type="ordered locus">YP_3885</name>
</gene>